<protein>
    <recommendedName>
        <fullName evidence="1">Small ribosomal subunit protein bS16</fullName>
    </recommendedName>
    <alternativeName>
        <fullName evidence="2">30S ribosomal protein S16</fullName>
    </alternativeName>
</protein>
<gene>
    <name evidence="1" type="primary">rpsP</name>
    <name type="ordered locus">SACOL1254</name>
</gene>
<name>RS16_STAAC</name>
<dbReference type="EMBL" id="CP000046">
    <property type="protein sequence ID" value="AAW38087.1"/>
    <property type="molecule type" value="Genomic_DNA"/>
</dbReference>
<dbReference type="RefSeq" id="WP_000268754.1">
    <property type="nucleotide sequence ID" value="NZ_JBGOFO010000002.1"/>
</dbReference>
<dbReference type="SMR" id="Q5HGJ4"/>
<dbReference type="GeneID" id="66839430"/>
<dbReference type="KEGG" id="sac:SACOL1254"/>
<dbReference type="HOGENOM" id="CLU_100590_5_0_9"/>
<dbReference type="Proteomes" id="UP000000530">
    <property type="component" value="Chromosome"/>
</dbReference>
<dbReference type="GO" id="GO:0005737">
    <property type="term" value="C:cytoplasm"/>
    <property type="evidence" value="ECO:0007669"/>
    <property type="project" value="UniProtKB-ARBA"/>
</dbReference>
<dbReference type="GO" id="GO:0015935">
    <property type="term" value="C:small ribosomal subunit"/>
    <property type="evidence" value="ECO:0007669"/>
    <property type="project" value="TreeGrafter"/>
</dbReference>
<dbReference type="GO" id="GO:0003735">
    <property type="term" value="F:structural constituent of ribosome"/>
    <property type="evidence" value="ECO:0007669"/>
    <property type="project" value="InterPro"/>
</dbReference>
<dbReference type="GO" id="GO:0006412">
    <property type="term" value="P:translation"/>
    <property type="evidence" value="ECO:0007669"/>
    <property type="project" value="UniProtKB-UniRule"/>
</dbReference>
<dbReference type="FunFam" id="3.30.1320.10:FF:000002">
    <property type="entry name" value="30S ribosomal protein S16"/>
    <property type="match status" value="1"/>
</dbReference>
<dbReference type="Gene3D" id="3.30.1320.10">
    <property type="match status" value="1"/>
</dbReference>
<dbReference type="HAMAP" id="MF_00385">
    <property type="entry name" value="Ribosomal_bS16"/>
    <property type="match status" value="1"/>
</dbReference>
<dbReference type="InterPro" id="IPR000307">
    <property type="entry name" value="Ribosomal_bS16"/>
</dbReference>
<dbReference type="InterPro" id="IPR023803">
    <property type="entry name" value="Ribosomal_bS16_dom_sf"/>
</dbReference>
<dbReference type="NCBIfam" id="TIGR00002">
    <property type="entry name" value="S16"/>
    <property type="match status" value="1"/>
</dbReference>
<dbReference type="PANTHER" id="PTHR12919">
    <property type="entry name" value="30S RIBOSOMAL PROTEIN S16"/>
    <property type="match status" value="1"/>
</dbReference>
<dbReference type="PANTHER" id="PTHR12919:SF20">
    <property type="entry name" value="SMALL RIBOSOMAL SUBUNIT PROTEIN BS16M"/>
    <property type="match status" value="1"/>
</dbReference>
<dbReference type="Pfam" id="PF00886">
    <property type="entry name" value="Ribosomal_S16"/>
    <property type="match status" value="1"/>
</dbReference>
<dbReference type="SUPFAM" id="SSF54565">
    <property type="entry name" value="Ribosomal protein S16"/>
    <property type="match status" value="1"/>
</dbReference>
<accession>Q5HGJ4</accession>
<proteinExistence type="inferred from homology"/>
<organism>
    <name type="scientific">Staphylococcus aureus (strain COL)</name>
    <dbReference type="NCBI Taxonomy" id="93062"/>
    <lineage>
        <taxon>Bacteria</taxon>
        <taxon>Bacillati</taxon>
        <taxon>Bacillota</taxon>
        <taxon>Bacilli</taxon>
        <taxon>Bacillales</taxon>
        <taxon>Staphylococcaceae</taxon>
        <taxon>Staphylococcus</taxon>
    </lineage>
</organism>
<reference key="1">
    <citation type="journal article" date="2005" name="J. Bacteriol.">
        <title>Insights on evolution of virulence and resistance from the complete genome analysis of an early methicillin-resistant Staphylococcus aureus strain and a biofilm-producing methicillin-resistant Staphylococcus epidermidis strain.</title>
        <authorList>
            <person name="Gill S.R."/>
            <person name="Fouts D.E."/>
            <person name="Archer G.L."/>
            <person name="Mongodin E.F."/>
            <person name="DeBoy R.T."/>
            <person name="Ravel J."/>
            <person name="Paulsen I.T."/>
            <person name="Kolonay J.F."/>
            <person name="Brinkac L.M."/>
            <person name="Beanan M.J."/>
            <person name="Dodson R.J."/>
            <person name="Daugherty S.C."/>
            <person name="Madupu R."/>
            <person name="Angiuoli S.V."/>
            <person name="Durkin A.S."/>
            <person name="Haft D.H."/>
            <person name="Vamathevan J.J."/>
            <person name="Khouri H."/>
            <person name="Utterback T.R."/>
            <person name="Lee C."/>
            <person name="Dimitrov G."/>
            <person name="Jiang L."/>
            <person name="Qin H."/>
            <person name="Weidman J."/>
            <person name="Tran K."/>
            <person name="Kang K.H."/>
            <person name="Hance I.R."/>
            <person name="Nelson K.E."/>
            <person name="Fraser C.M."/>
        </authorList>
    </citation>
    <scope>NUCLEOTIDE SEQUENCE [LARGE SCALE GENOMIC DNA]</scope>
    <source>
        <strain>COL</strain>
    </source>
</reference>
<sequence>MAVKIRLTRLGSKRNPFYRIVVADARSPRDGRIIEQIGTYNPTSANAPEIKVDEALALKWLNDGAKPTDTVHNILSKEGIMKKFDEQKKAK</sequence>
<feature type="chain" id="PRO_0000167241" description="Small ribosomal subunit protein bS16">
    <location>
        <begin position="1"/>
        <end position="91"/>
    </location>
</feature>
<evidence type="ECO:0000255" key="1">
    <source>
        <dbReference type="HAMAP-Rule" id="MF_00385"/>
    </source>
</evidence>
<evidence type="ECO:0000305" key="2"/>
<comment type="similarity">
    <text evidence="1">Belongs to the bacterial ribosomal protein bS16 family.</text>
</comment>
<keyword id="KW-0687">Ribonucleoprotein</keyword>
<keyword id="KW-0689">Ribosomal protein</keyword>